<dbReference type="EMBL" id="AL136699">
    <property type="protein sequence ID" value="CAB66634.1"/>
    <property type="molecule type" value="mRNA"/>
</dbReference>
<dbReference type="EMBL" id="AY358976">
    <property type="protein sequence ID" value="AAQ89335.1"/>
    <property type="status" value="ALT_FRAME"/>
    <property type="molecule type" value="mRNA"/>
</dbReference>
<dbReference type="EMBL" id="BT006717">
    <property type="protein sequence ID" value="AAP35363.1"/>
    <property type="molecule type" value="mRNA"/>
</dbReference>
<dbReference type="EMBL" id="CN310658">
    <property type="status" value="NOT_ANNOTATED_CDS"/>
    <property type="molecule type" value="mRNA"/>
</dbReference>
<dbReference type="EMBL" id="CR533457">
    <property type="protein sequence ID" value="CAG38488.1"/>
    <property type="molecule type" value="mRNA"/>
</dbReference>
<dbReference type="EMBL" id="AK289629">
    <property type="protein sequence ID" value="BAF82318.1"/>
    <property type="molecule type" value="mRNA"/>
</dbReference>
<dbReference type="EMBL" id="AK290757">
    <property type="protein sequence ID" value="BAF83446.1"/>
    <property type="molecule type" value="mRNA"/>
</dbReference>
<dbReference type="EMBL" id="AL832811">
    <property type="protein sequence ID" value="CAI46171.1"/>
    <property type="molecule type" value="mRNA"/>
</dbReference>
<dbReference type="EMBL" id="AP000757">
    <property type="status" value="NOT_ANNOTATED_CDS"/>
    <property type="molecule type" value="Genomic_DNA"/>
</dbReference>
<dbReference type="EMBL" id="CH471065">
    <property type="protein sequence ID" value="EAW67327.1"/>
    <property type="molecule type" value="Genomic_DNA"/>
</dbReference>
<dbReference type="EMBL" id="BC018652">
    <property type="protein sequence ID" value="AAH18652.1"/>
    <property type="molecule type" value="mRNA"/>
</dbReference>
<dbReference type="EMBL" id="BC093040">
    <property type="protein sequence ID" value="AAH93040.1"/>
    <property type="molecule type" value="mRNA"/>
</dbReference>
<dbReference type="CCDS" id="CCDS8387.1">
    <molecule id="Q9H0Q3-1"/>
</dbReference>
<dbReference type="RefSeq" id="NP_001158303.1">
    <molecule id="Q9H0Q3-1"/>
    <property type="nucleotide sequence ID" value="NM_001164831.3"/>
</dbReference>
<dbReference type="RefSeq" id="NP_001158304.1">
    <molecule id="Q9H0Q3-1"/>
    <property type="nucleotide sequence ID" value="NM_001164832.3"/>
</dbReference>
<dbReference type="RefSeq" id="NP_001158308.1">
    <molecule id="Q9H0Q3-1"/>
    <property type="nucleotide sequence ID" value="NM_001164836.3"/>
</dbReference>
<dbReference type="RefSeq" id="NP_001158309.1">
    <molecule id="Q9H0Q3-1"/>
    <property type="nucleotide sequence ID" value="NM_001164837.3"/>
</dbReference>
<dbReference type="RefSeq" id="NP_071286.1">
    <molecule id="Q9H0Q3-1"/>
    <property type="nucleotide sequence ID" value="NM_022003.4"/>
</dbReference>
<dbReference type="PDB" id="8D3U">
    <property type="method" value="EM"/>
    <property type="resolution" value="3.70 A"/>
    <property type="chains" value="G=1-95"/>
</dbReference>
<dbReference type="PDB" id="8D3V">
    <property type="method" value="EM"/>
    <property type="resolution" value="3.40 A"/>
    <property type="chains" value="G=1-95"/>
</dbReference>
<dbReference type="PDB" id="8D3W">
    <property type="method" value="EM"/>
    <property type="resolution" value="3.50 A"/>
    <property type="chains" value="G=1-95"/>
</dbReference>
<dbReference type="PDB" id="8D3X">
    <property type="method" value="EM"/>
    <property type="resolution" value="4.10 A"/>
    <property type="chains" value="G=1-95"/>
</dbReference>
<dbReference type="PDB" id="8D3Y">
    <property type="method" value="EM"/>
    <property type="resolution" value="3.90 A"/>
    <property type="chains" value="G=1-95"/>
</dbReference>
<dbReference type="PDBsum" id="8D3U"/>
<dbReference type="PDBsum" id="8D3V"/>
<dbReference type="PDBsum" id="8D3W"/>
<dbReference type="PDBsum" id="8D3X"/>
<dbReference type="PDBsum" id="8D3Y"/>
<dbReference type="EMDB" id="EMD-27164"/>
<dbReference type="EMDB" id="EMD-27165"/>
<dbReference type="EMDB" id="EMD-27166"/>
<dbReference type="EMDB" id="EMD-27167"/>
<dbReference type="EMDB" id="EMD-27168"/>
<dbReference type="SMR" id="Q9H0Q3"/>
<dbReference type="BioGRID" id="119799">
    <property type="interactions" value="94"/>
</dbReference>
<dbReference type="BioGRID" id="1529426">
    <property type="interactions" value="34"/>
</dbReference>
<dbReference type="ComplexPortal" id="CPX-8144">
    <property type="entry name" value="Sodium:potassium-exchanging ATPase complex, FXYD6 variant"/>
</dbReference>
<dbReference type="CORUM" id="Q9H0Q3"/>
<dbReference type="FunCoup" id="Q9H0Q3">
    <property type="interactions" value="590"/>
</dbReference>
<dbReference type="IntAct" id="Q9H0Q3">
    <property type="interactions" value="87"/>
</dbReference>
<dbReference type="MINT" id="Q9H0Q3"/>
<dbReference type="STRING" id="9606.ENSP00000442756"/>
<dbReference type="TCDB" id="1.A.27.1.3">
    <property type="family name" value="the phospholemman (plm) family"/>
</dbReference>
<dbReference type="iPTMnet" id="Q9H0Q3"/>
<dbReference type="PhosphoSitePlus" id="Q9H0Q3"/>
<dbReference type="SwissPalm" id="Q9H0Q3"/>
<dbReference type="BioMuta" id="FXYD6"/>
<dbReference type="DMDM" id="20138342"/>
<dbReference type="jPOST" id="Q9H0Q3"/>
<dbReference type="MassIVE" id="Q9H0Q3"/>
<dbReference type="PaxDb" id="9606-ENSP00000463024"/>
<dbReference type="PeptideAtlas" id="Q9H0Q3"/>
<dbReference type="ProteomicsDB" id="80311">
    <molecule id="Q9H0Q3-1"/>
</dbReference>
<dbReference type="Pumba" id="Q9H0Q3"/>
<dbReference type="Antibodypedia" id="45759">
    <property type="antibodies" value="126 antibodies from 22 providers"/>
</dbReference>
<dbReference type="DNASU" id="53826"/>
<dbReference type="Ensembl" id="ENST00000260282.8">
    <molecule id="Q9H0Q3-1"/>
    <property type="protein sequence ID" value="ENSP00000260282.4"/>
    <property type="gene ID" value="ENSG00000137726.17"/>
</dbReference>
<dbReference type="Ensembl" id="ENST00000524656.5">
    <molecule id="Q9H0Q3-1"/>
    <property type="protein sequence ID" value="ENSP00000431427.1"/>
    <property type="gene ID" value="ENSG00000137726.17"/>
</dbReference>
<dbReference type="Ensembl" id="ENST00000526014.6">
    <molecule id="Q9H0Q3-1"/>
    <property type="protein sequence ID" value="ENSP00000433312.1"/>
    <property type="gene ID" value="ENSG00000137726.17"/>
</dbReference>
<dbReference type="Ensembl" id="ENST00000527717.5">
    <molecule id="Q9H0Q3-1"/>
    <property type="protein sequence ID" value="ENSP00000431446.1"/>
    <property type="gene ID" value="ENSG00000137726.17"/>
</dbReference>
<dbReference type="Ensembl" id="ENST00000530956.6">
    <molecule id="Q9H0Q3-1"/>
    <property type="protein sequence ID" value="ENSP00000463158.1"/>
    <property type="gene ID" value="ENSG00000137726.17"/>
</dbReference>
<dbReference type="Ensembl" id="ENST00000539526.5">
    <molecule id="Q9H0Q3-1"/>
    <property type="protein sequence ID" value="ENSP00000442756.1"/>
    <property type="gene ID" value="ENSG00000137726.17"/>
</dbReference>
<dbReference type="GeneID" id="53826"/>
<dbReference type="KEGG" id="hsa:53826"/>
<dbReference type="MANE-Select" id="ENST00000526014.6">
    <property type="protein sequence ID" value="ENSP00000433312.1"/>
    <property type="RefSeq nucleotide sequence ID" value="NM_022003.4"/>
    <property type="RefSeq protein sequence ID" value="NP_071286.1"/>
</dbReference>
<dbReference type="UCSC" id="uc001pro.3">
    <molecule id="Q9H0Q3-1"/>
    <property type="organism name" value="human"/>
</dbReference>
<dbReference type="AGR" id="HGNC:4030"/>
<dbReference type="CTD" id="53826"/>
<dbReference type="DisGeNET" id="53826"/>
<dbReference type="GeneCards" id="FXYD6"/>
<dbReference type="HGNC" id="HGNC:4030">
    <property type="gene designation" value="FXYD6"/>
</dbReference>
<dbReference type="HPA" id="ENSG00000137726">
    <property type="expression patterns" value="Low tissue specificity"/>
</dbReference>
<dbReference type="MIM" id="606683">
    <property type="type" value="gene"/>
</dbReference>
<dbReference type="neXtProt" id="NX_Q9H0Q3"/>
<dbReference type="OpenTargets" id="ENSG00000137726"/>
<dbReference type="OpenTargets" id="ENSG00000255245"/>
<dbReference type="PharmGKB" id="PA28446"/>
<dbReference type="VEuPathDB" id="HostDB:ENSG00000137726"/>
<dbReference type="GeneTree" id="ENSGT00940000153062"/>
<dbReference type="HOGENOM" id="CLU_171208_3_0_1"/>
<dbReference type="InParanoid" id="Q9H0Q3"/>
<dbReference type="OMA" id="RCHCGAN"/>
<dbReference type="OrthoDB" id="8895254at2759"/>
<dbReference type="PAN-GO" id="Q9H0Q3">
    <property type="GO annotations" value="2 GO annotations based on evolutionary models"/>
</dbReference>
<dbReference type="PhylomeDB" id="Q9H0Q3"/>
<dbReference type="TreeFam" id="TF333443"/>
<dbReference type="PathwayCommons" id="Q9H0Q3"/>
<dbReference type="Reactome" id="R-HSA-5578775">
    <property type="pathway name" value="Ion homeostasis"/>
</dbReference>
<dbReference type="Reactome" id="R-HSA-936837">
    <property type="pathway name" value="Ion transport by P-type ATPases"/>
</dbReference>
<dbReference type="Reactome" id="R-HSA-9679191">
    <property type="pathway name" value="Potential therapeutics for SARS"/>
</dbReference>
<dbReference type="SignaLink" id="Q9H0Q3"/>
<dbReference type="BioGRID-ORCS" id="53826">
    <property type="hits" value="30 hits in 1081 CRISPR screens"/>
</dbReference>
<dbReference type="ChiTaRS" id="FXYD6">
    <property type="organism name" value="human"/>
</dbReference>
<dbReference type="GenomeRNAi" id="53826"/>
<dbReference type="Pharos" id="Q9H0Q3">
    <property type="development level" value="Tbio"/>
</dbReference>
<dbReference type="PRO" id="PR:Q9H0Q3"/>
<dbReference type="Proteomes" id="UP000005640">
    <property type="component" value="Chromosome 11"/>
</dbReference>
<dbReference type="RNAct" id="Q9H0Q3">
    <property type="molecule type" value="protein"/>
</dbReference>
<dbReference type="Bgee" id="ENSG00000137726">
    <property type="expression patterns" value="Expressed in cortical plate and 204 other cell types or tissues"/>
</dbReference>
<dbReference type="ExpressionAtlas" id="Q9H0Q3">
    <property type="expression patterns" value="baseline and differential"/>
</dbReference>
<dbReference type="GO" id="GO:0098978">
    <property type="term" value="C:glutamatergic synapse"/>
    <property type="evidence" value="ECO:0007669"/>
    <property type="project" value="Ensembl"/>
</dbReference>
<dbReference type="GO" id="GO:0005886">
    <property type="term" value="C:plasma membrane"/>
    <property type="evidence" value="ECO:0000314"/>
    <property type="project" value="LIFEdb"/>
</dbReference>
<dbReference type="GO" id="GO:0045211">
    <property type="term" value="C:postsynaptic membrane"/>
    <property type="evidence" value="ECO:0007669"/>
    <property type="project" value="Ensembl"/>
</dbReference>
<dbReference type="GO" id="GO:0042734">
    <property type="term" value="C:presynaptic membrane"/>
    <property type="evidence" value="ECO:0007669"/>
    <property type="project" value="Ensembl"/>
</dbReference>
<dbReference type="GO" id="GO:0017080">
    <property type="term" value="F:sodium channel regulator activity"/>
    <property type="evidence" value="ECO:0000318"/>
    <property type="project" value="GO_Central"/>
</dbReference>
<dbReference type="GO" id="GO:1903278">
    <property type="term" value="P:positive regulation of sodium ion export across plasma membrane"/>
    <property type="evidence" value="ECO:0000318"/>
    <property type="project" value="GO_Central"/>
</dbReference>
<dbReference type="GO" id="GO:0006813">
    <property type="term" value="P:potassium ion transport"/>
    <property type="evidence" value="ECO:0007669"/>
    <property type="project" value="UniProtKB-KW"/>
</dbReference>
<dbReference type="GO" id="GO:0006814">
    <property type="term" value="P:sodium ion transport"/>
    <property type="evidence" value="ECO:0007669"/>
    <property type="project" value="UniProtKB-KW"/>
</dbReference>
<dbReference type="FunFam" id="1.20.5.780:FF:000001">
    <property type="entry name" value="Fxyd domain-containing ion transport regulator"/>
    <property type="match status" value="1"/>
</dbReference>
<dbReference type="Gene3D" id="1.20.5.780">
    <property type="entry name" value="Single helix bin"/>
    <property type="match status" value="1"/>
</dbReference>
<dbReference type="InterPro" id="IPR047297">
    <property type="entry name" value="FXYD_motif"/>
</dbReference>
<dbReference type="InterPro" id="IPR000272">
    <property type="entry name" value="Ion-transport_regulator_FXYD"/>
</dbReference>
<dbReference type="PANTHER" id="PTHR14132:SF15">
    <property type="entry name" value="FXYD DOMAIN-CONTAINING ION TRANSPORT REGULATOR 6-RELATED"/>
    <property type="match status" value="1"/>
</dbReference>
<dbReference type="PANTHER" id="PTHR14132">
    <property type="entry name" value="SODIUM/POTASSIUM-TRANSPORTING ATPASE SUBUNIT GAMMA"/>
    <property type="match status" value="1"/>
</dbReference>
<dbReference type="Pfam" id="PF02038">
    <property type="entry name" value="ATP1G1_PLM_MAT8"/>
    <property type="match status" value="1"/>
</dbReference>
<dbReference type="PROSITE" id="PS01310">
    <property type="entry name" value="FXYD"/>
    <property type="match status" value="1"/>
</dbReference>
<name>FXYD6_HUMAN</name>
<feature type="signal peptide" evidence="1">
    <location>
        <begin position="1"/>
        <end position="18"/>
    </location>
</feature>
<feature type="chain" id="PRO_0000010372" description="FXYD domain-containing ion transport regulator 6">
    <location>
        <begin position="19"/>
        <end position="95"/>
    </location>
</feature>
<feature type="topological domain" description="Extracellular" evidence="2">
    <location>
        <begin position="19"/>
        <end position="35"/>
    </location>
</feature>
<feature type="transmembrane region" description="Helical" evidence="6 11">
    <location>
        <begin position="36"/>
        <end position="57"/>
    </location>
</feature>
<feature type="topological domain" description="Cytoplasmic" evidence="2">
    <location>
        <begin position="58"/>
        <end position="95"/>
    </location>
</feature>
<feature type="region of interest" description="Disordered" evidence="3">
    <location>
        <begin position="69"/>
        <end position="95"/>
    </location>
</feature>
<feature type="splice variant" id="VSP_045996" description="In isoform 2." evidence="7">
    <original>SRRCKCSFNQKPRAPGDEEAQVENLITANATEPQKAEN</original>
    <variation>RPQEMRKPRWRTSSPPMQQSPRKQRTEVQPSGGRRQPQGGRGPVLLWQKIPLWGQ</variation>
    <location>
        <begin position="58"/>
        <end position="95"/>
    </location>
</feature>
<feature type="turn" evidence="15">
    <location>
        <begin position="34"/>
        <end position="36"/>
    </location>
</feature>
<feature type="helix" evidence="15">
    <location>
        <begin position="37"/>
        <end position="56"/>
    </location>
</feature>
<proteinExistence type="evidence at protein level"/>
<protein>
    <recommendedName>
        <fullName>FXYD domain-containing ion transport regulator 6</fullName>
    </recommendedName>
    <alternativeName>
        <fullName>Phosphohippolin</fullName>
    </alternativeName>
</protein>
<evidence type="ECO:0000250" key="1">
    <source>
        <dbReference type="UniProtKB" id="Q91XV6"/>
    </source>
</evidence>
<evidence type="ECO:0000255" key="2"/>
<evidence type="ECO:0000256" key="3">
    <source>
        <dbReference type="SAM" id="MobiDB-lite"/>
    </source>
</evidence>
<evidence type="ECO:0000269" key="4">
    <source>
    </source>
</evidence>
<evidence type="ECO:0000269" key="5">
    <source>
    </source>
</evidence>
<evidence type="ECO:0000269" key="6">
    <source>
    </source>
</evidence>
<evidence type="ECO:0000303" key="7">
    <source>
    </source>
</evidence>
<evidence type="ECO:0000305" key="8"/>
<evidence type="ECO:0000312" key="9">
    <source>
        <dbReference type="HGNC" id="HGNC:4030"/>
    </source>
</evidence>
<evidence type="ECO:0007744" key="10">
    <source>
        <dbReference type="PDB" id="8D3U"/>
    </source>
</evidence>
<evidence type="ECO:0007744" key="11">
    <source>
        <dbReference type="PDB" id="8D3V"/>
    </source>
</evidence>
<evidence type="ECO:0007744" key="12">
    <source>
        <dbReference type="PDB" id="8D3W"/>
    </source>
</evidence>
<evidence type="ECO:0007744" key="13">
    <source>
        <dbReference type="PDB" id="8D3X"/>
    </source>
</evidence>
<evidence type="ECO:0007744" key="14">
    <source>
        <dbReference type="PDB" id="8D3Y"/>
    </source>
</evidence>
<evidence type="ECO:0007829" key="15">
    <source>
        <dbReference type="PDB" id="8D3V"/>
    </source>
</evidence>
<accession>Q9H0Q3</accession>
<accession>A8K0R4</accession>
<accession>J3QLD2</accession>
<accession>Q6FIG9</accession>
<accession>Q6UW52</accession>
<organism>
    <name type="scientific">Homo sapiens</name>
    <name type="common">Human</name>
    <dbReference type="NCBI Taxonomy" id="9606"/>
    <lineage>
        <taxon>Eukaryota</taxon>
        <taxon>Metazoa</taxon>
        <taxon>Chordata</taxon>
        <taxon>Craniata</taxon>
        <taxon>Vertebrata</taxon>
        <taxon>Euteleostomi</taxon>
        <taxon>Mammalia</taxon>
        <taxon>Eutheria</taxon>
        <taxon>Euarchontoglires</taxon>
        <taxon>Primates</taxon>
        <taxon>Haplorrhini</taxon>
        <taxon>Catarrhini</taxon>
        <taxon>Hominidae</taxon>
        <taxon>Homo</taxon>
    </lineage>
</organism>
<comment type="function">
    <text evidence="1 5">Associates with and regulates the activity of the sodium/potassium-transporting ATPase (NKA) which catalyzes the hydrolysis of ATP coupled with the exchange of Na(+) and K(+) ions across the plasma membrane. Reduces the apparent affinity for intracellular Na(+) with no change in the apparent affinity for extracellular K(+) (PubMed:33231612). In addition to modulating NKA kinetics, may also function as a regulator of NKA localization to the plasma membrane (By similarity).</text>
</comment>
<comment type="subunit">
    <text evidence="4 6">Regulatory subunit of the sodium/potassium-transporting ATPase which is composed of a catalytic alpha subunit, a non-catalytic beta subunit and an additional regulatory subunit. The regulatory subunit, a member of the FXYD protein family, modulates the enzymatic activity in a tissue- and isoform-specific way by changing affinities of the Na+/K+-ATPase toward Na(+), K(+) or ATP.</text>
</comment>
<comment type="interaction">
    <interactant intactId="EBI-713304">
        <id>Q9H0Q3</id>
    </interactant>
    <interactant intactId="EBI-12904424">
        <id>Q8NCL9</id>
        <label>APCDD1L</label>
    </interactant>
    <organismsDiffer>false</organismsDiffer>
    <experiments>3</experiments>
</comment>
<comment type="interaction">
    <interactant intactId="EBI-713304">
        <id>Q9H0Q3</id>
    </interactant>
    <interactant intactId="EBI-2606935">
        <id>Q96BI3</id>
        <label>APH1A</label>
    </interactant>
    <organismsDiffer>false</organismsDiffer>
    <experiments>3</experiments>
</comment>
<comment type="interaction">
    <interactant intactId="EBI-713304">
        <id>Q9H0Q3</id>
    </interactant>
    <interactant intactId="EBI-13059134">
        <id>Q13520</id>
        <label>AQP6</label>
    </interactant>
    <organismsDiffer>false</organismsDiffer>
    <experiments>3</experiments>
</comment>
<comment type="interaction">
    <interactant intactId="EBI-713304">
        <id>Q9H0Q3</id>
    </interactant>
    <interactant intactId="EBI-11343438">
        <id>Q3SXY8</id>
        <label>ARL13B</label>
    </interactant>
    <organismsDiffer>false</organismsDiffer>
    <experiments>3</experiments>
</comment>
<comment type="interaction">
    <interactant intactId="EBI-713304">
        <id>Q9H0Q3</id>
    </interactant>
    <interactant intactId="EBI-12222807">
        <id>P04233-2</id>
        <label>CD74</label>
    </interactant>
    <organismsDiffer>false</organismsDiffer>
    <experiments>3</experiments>
</comment>
<comment type="interaction">
    <interactant intactId="EBI-713304">
        <id>Q9H0Q3</id>
    </interactant>
    <interactant intactId="EBI-2622997">
        <id>Q9HA82</id>
        <label>CERS4</label>
    </interactant>
    <organismsDiffer>false</organismsDiffer>
    <experiments>3</experiments>
</comment>
<comment type="interaction">
    <interactant intactId="EBI-713304">
        <id>Q9H0Q3</id>
    </interactant>
    <interactant intactId="EBI-740744">
        <id>O95471</id>
        <label>CLDN7</label>
    </interactant>
    <organismsDiffer>false</organismsDiffer>
    <experiments>3</experiments>
</comment>
<comment type="interaction">
    <interactant intactId="EBI-713304">
        <id>Q9H0Q3</id>
    </interactant>
    <interactant intactId="EBI-2873246">
        <id>Q8IUN9</id>
        <label>CLEC10A</label>
    </interactant>
    <organismsDiffer>false</organismsDiffer>
    <experiments>3</experiments>
</comment>
<comment type="interaction">
    <interactant intactId="EBI-713304">
        <id>Q9H0Q3</id>
    </interactant>
    <interactant intactId="EBI-6942903">
        <id>Q96BA8</id>
        <label>CREB3L1</label>
    </interactant>
    <organismsDiffer>false</organismsDiffer>
    <experiments>6</experiments>
</comment>
<comment type="interaction">
    <interactant intactId="EBI-713304">
        <id>Q9H0Q3</id>
    </interactant>
    <interactant intactId="EBI-7962814">
        <id>Q9GZP9</id>
        <label>DERL2</label>
    </interactant>
    <organismsDiffer>false</organismsDiffer>
    <experiments>3</experiments>
</comment>
<comment type="interaction">
    <interactant intactId="EBI-713304">
        <id>Q9H0Q3</id>
    </interactant>
    <interactant intactId="EBI-3915253">
        <id>Q15125</id>
        <label>EBP</label>
    </interactant>
    <organismsDiffer>false</organismsDiffer>
    <experiments>3</experiments>
</comment>
<comment type="interaction">
    <interactant intactId="EBI-713304">
        <id>Q9H0Q3</id>
    </interactant>
    <interactant intactId="EBI-17206972">
        <id>Q9NXB9</id>
        <label>ELOVL2</label>
    </interactant>
    <organismsDiffer>false</organismsDiffer>
    <experiments>3</experiments>
</comment>
<comment type="interaction">
    <interactant intactId="EBI-713304">
        <id>Q9H0Q3</id>
    </interactant>
    <interactant intactId="EBI-18535450">
        <id>Q9GZR5</id>
        <label>ELOVL4</label>
    </interactant>
    <organismsDiffer>false</organismsDiffer>
    <experiments>3</experiments>
</comment>
<comment type="interaction">
    <interactant intactId="EBI-713304">
        <id>Q9H0Q3</id>
    </interactant>
    <interactant intactId="EBI-781551">
        <id>Q9Y282</id>
        <label>ERGIC3</label>
    </interactant>
    <organismsDiffer>false</organismsDiffer>
    <experiments>3</experiments>
</comment>
<comment type="interaction">
    <interactant intactId="EBI-713304">
        <id>Q9H0Q3</id>
    </interactant>
    <interactant intactId="EBI-2833872">
        <id>O15552</id>
        <label>FFAR2</label>
    </interactant>
    <organismsDiffer>false</organismsDiffer>
    <experiments>3</experiments>
</comment>
<comment type="interaction">
    <interactant intactId="EBI-713304">
        <id>Q9H0Q3</id>
    </interactant>
    <interactant intactId="EBI-17291771">
        <id>P25090</id>
        <label>FPR2</label>
    </interactant>
    <organismsDiffer>false</organismsDiffer>
    <experiments>3</experiments>
</comment>
<comment type="interaction">
    <interactant intactId="EBI-713304">
        <id>Q9H0Q3</id>
    </interactant>
    <interactant intactId="EBI-17458373">
        <id>P48165</id>
        <label>GJA8</label>
    </interactant>
    <organismsDiffer>false</organismsDiffer>
    <experiments>3</experiments>
</comment>
<comment type="interaction">
    <interactant intactId="EBI-713304">
        <id>Q9H0Q3</id>
    </interactant>
    <interactant intactId="EBI-18076404">
        <id>O15529</id>
        <label>GPR42</label>
    </interactant>
    <organismsDiffer>false</organismsDiffer>
    <experiments>3</experiments>
</comment>
<comment type="interaction">
    <interactant intactId="EBI-713304">
        <id>Q9H0Q3</id>
    </interactant>
    <interactant intactId="EBI-10266796">
        <id>Q8N5M9</id>
        <label>JAGN1</label>
    </interactant>
    <organismsDiffer>false</organismsDiffer>
    <experiments>3</experiments>
</comment>
<comment type="interaction">
    <interactant intactId="EBI-713304">
        <id>Q9H0Q3</id>
    </interactant>
    <interactant intactId="EBI-12017638">
        <id>P48051</id>
        <label>KCNJ6</label>
    </interactant>
    <organismsDiffer>false</organismsDiffer>
    <experiments>3</experiments>
</comment>
<comment type="interaction">
    <interactant intactId="EBI-713304">
        <id>Q9H0Q3</id>
    </interactant>
    <interactant intactId="EBI-17566767">
        <id>Q6ZUX7</id>
        <label>LHFPL2</label>
    </interactant>
    <organismsDiffer>false</organismsDiffer>
    <experiments>3</experiments>
</comment>
<comment type="interaction">
    <interactant intactId="EBI-713304">
        <id>Q9H0Q3</id>
    </interactant>
    <interactant intactId="EBI-2820517">
        <id>Q8TAF8</id>
        <label>LHFPL5</label>
    </interactant>
    <organismsDiffer>false</organismsDiffer>
    <experiments>3</experiments>
</comment>
<comment type="interaction">
    <interactant intactId="EBI-713304">
        <id>Q9H0Q3</id>
    </interactant>
    <interactant intactId="EBI-11956541">
        <id>Q9GZY8-5</id>
        <label>MFF</label>
    </interactant>
    <organismsDiffer>false</organismsDiffer>
    <experiments>3</experiments>
</comment>
<comment type="interaction">
    <interactant intactId="EBI-713304">
        <id>Q9H0Q3</id>
    </interactant>
    <interactant intactId="EBI-724754">
        <id>O14880</id>
        <label>MGST3</label>
    </interactant>
    <organismsDiffer>false</organismsDiffer>
    <experiments>3</experiments>
</comment>
<comment type="interaction">
    <interactant intactId="EBI-713304">
        <id>Q9H0Q3</id>
    </interactant>
    <interactant intactId="EBI-6163737">
        <id>Q8N4V1</id>
        <label>MMGT1</label>
    </interactant>
    <organismsDiffer>false</organismsDiffer>
    <experiments>3</experiments>
</comment>
<comment type="interaction">
    <interactant intactId="EBI-713304">
        <id>Q9H0Q3</id>
    </interactant>
    <interactant intactId="EBI-2683029">
        <id>Q9NX40</id>
        <label>OCIAD1</label>
    </interactant>
    <organismsDiffer>false</organismsDiffer>
    <experiments>3</experiments>
</comment>
<comment type="interaction">
    <interactant intactId="EBI-713304">
        <id>Q9H0Q3</id>
    </interactant>
    <interactant intactId="EBI-594836">
        <id>O00623</id>
        <label>PEX12</label>
    </interactant>
    <organismsDiffer>false</organismsDiffer>
    <experiments>3</experiments>
</comment>
<comment type="interaction">
    <interactant intactId="EBI-713304">
        <id>Q9H0Q3</id>
    </interactant>
    <interactant intactId="EBI-1050125">
        <id>O15173</id>
        <label>PGRMC2</label>
    </interactant>
    <organismsDiffer>false</organismsDiffer>
    <experiments>3</experiments>
</comment>
<comment type="interaction">
    <interactant intactId="EBI-713304">
        <id>Q9H0Q3</id>
    </interactant>
    <interactant intactId="EBI-12104986">
        <id>O75783</id>
        <label>RHBDL1</label>
    </interactant>
    <organismsDiffer>false</organismsDiffer>
    <experiments>3</experiments>
</comment>
<comment type="interaction">
    <interactant intactId="EBI-713304">
        <id>Q9H0Q3</id>
    </interactant>
    <interactant intactId="EBI-15853497">
        <id>Q9UBD6</id>
        <label>RHCG</label>
    </interactant>
    <organismsDiffer>false</organismsDiffer>
    <experiments>3</experiments>
</comment>
<comment type="interaction">
    <interactant intactId="EBI-713304">
        <id>Q9H0Q3</id>
    </interactant>
    <interactant intactId="EBI-18397230">
        <id>Q6P5S7</id>
        <label>RNASEK</label>
    </interactant>
    <organismsDiffer>false</organismsDiffer>
    <experiments>3</experiments>
</comment>
<comment type="interaction">
    <interactant intactId="EBI-713304">
        <id>Q9H0Q3</id>
    </interactant>
    <interactant intactId="EBI-3923031">
        <id>Q14973</id>
        <label>SLC10A1</label>
    </interactant>
    <organismsDiffer>false</organismsDiffer>
    <experiments>3</experiments>
</comment>
<comment type="interaction">
    <interactant intactId="EBI-713304">
        <id>Q9H0Q3</id>
    </interactant>
    <interactant intactId="EBI-18159983">
        <id>Q3KNW5</id>
        <label>SLC10A6</label>
    </interactant>
    <organismsDiffer>false</organismsDiffer>
    <experiments>3</experiments>
</comment>
<comment type="interaction">
    <interactant intactId="EBI-713304">
        <id>Q9H0Q3</id>
    </interactant>
    <interactant intactId="EBI-3921243">
        <id>O60669</id>
        <label>SLC16A7</label>
    </interactant>
    <organismsDiffer>false</organismsDiffer>
    <experiments>3</experiments>
</comment>
<comment type="interaction">
    <interactant intactId="EBI-713304">
        <id>Q9H0Q3</id>
    </interactant>
    <interactant intactId="EBI-8644112">
        <id>Q9BRI3</id>
        <label>SLC30A2</label>
    </interactant>
    <organismsDiffer>false</organismsDiffer>
    <experiments>3</experiments>
</comment>
<comment type="interaction">
    <interactant intactId="EBI-713304">
        <id>Q9H0Q3</id>
    </interactant>
    <interactant intactId="EBI-17295964">
        <id>Q9NQQ7-3</id>
        <label>SLC35C2</label>
    </interactant>
    <organismsDiffer>false</organismsDiffer>
    <experiments>3</experiments>
</comment>
<comment type="interaction">
    <interactant intactId="EBI-713304">
        <id>Q9H0Q3</id>
    </interactant>
    <interactant intactId="EBI-13389236">
        <id>Q7Z769</id>
        <label>SLC35E3</label>
    </interactant>
    <organismsDiffer>false</organismsDiffer>
    <experiments>3</experiments>
</comment>
<comment type="interaction">
    <interactant intactId="EBI-713304">
        <id>Q9H0Q3</id>
    </interactant>
    <interactant intactId="EBI-12898013">
        <id>Q9NP94</id>
        <label>SLC39A2</label>
    </interactant>
    <organismsDiffer>false</organismsDiffer>
    <experiments>3</experiments>
</comment>
<comment type="interaction">
    <interactant intactId="EBI-713304">
        <id>Q9H0Q3</id>
    </interactant>
    <interactant intactId="EBI-12887226">
        <id>Q96FL8</id>
        <label>SLC47A1</label>
    </interactant>
    <organismsDiffer>false</organismsDiffer>
    <experiments>3</experiments>
</comment>
<comment type="interaction">
    <interactant intactId="EBI-713304">
        <id>Q9H0Q3</id>
    </interactant>
    <interactant intactId="EBI-12883142">
        <id>Q8N4V2</id>
        <label>SVOP</label>
    </interactant>
    <organismsDiffer>false</organismsDiffer>
    <experiments>4</experiments>
</comment>
<comment type="interaction">
    <interactant intactId="EBI-713304">
        <id>Q9H0Q3</id>
    </interactant>
    <interactant intactId="EBI-12947623">
        <id>Q96MV1</id>
        <label>TLCD4</label>
    </interactant>
    <organismsDiffer>false</organismsDiffer>
    <experiments>3</experiments>
</comment>
<comment type="interaction">
    <interactant intactId="EBI-713304">
        <id>Q9H0Q3</id>
    </interactant>
    <interactant intactId="EBI-13351685">
        <id>Q96CE8</id>
        <label>TM4SF18</label>
    </interactant>
    <organismsDiffer>false</organismsDiffer>
    <experiments>3</experiments>
</comment>
<comment type="interaction">
    <interactant intactId="EBI-713304">
        <id>Q9H0Q3</id>
    </interactant>
    <interactant intactId="EBI-13329239">
        <id>Q6P9G4</id>
        <label>TMEM154</label>
    </interactant>
    <organismsDiffer>false</organismsDiffer>
    <experiments>3</experiments>
</comment>
<comment type="interaction">
    <interactant intactId="EBI-713304">
        <id>Q9H0Q3</id>
    </interactant>
    <interactant intactId="EBI-10982110">
        <id>Q96Q45-2</id>
        <label>TMEM237</label>
    </interactant>
    <organismsDiffer>false</organismsDiffer>
    <experiments>3</experiments>
</comment>
<comment type="interaction">
    <interactant intactId="EBI-713304">
        <id>Q9H0Q3</id>
    </interactant>
    <interactant intactId="EBI-11528917">
        <id>Q8WW34-2</id>
        <label>TMEM239</label>
    </interactant>
    <organismsDiffer>false</organismsDiffer>
    <experiments>3</experiments>
</comment>
<comment type="interaction">
    <interactant intactId="EBI-713304">
        <id>Q9H0Q3</id>
    </interactant>
    <interactant intactId="EBI-11722971">
        <id>Q53FP2</id>
        <label>TMEM35A</label>
    </interactant>
    <organismsDiffer>false</organismsDiffer>
    <experiments>3</experiments>
</comment>
<comment type="interaction">
    <interactant intactId="EBI-713304">
        <id>Q9H0Q3</id>
    </interactant>
    <interactant intactId="EBI-12878352">
        <id>A0PK05</id>
        <label>TMEM72</label>
    </interactant>
    <organismsDiffer>false</organismsDiffer>
    <experiments>3</experiments>
</comment>
<comment type="interaction">
    <interactant intactId="EBI-713304">
        <id>Q9H0Q3</id>
    </interactant>
    <interactant intactId="EBI-2548832">
        <id>Q8N661</id>
        <label>TMEM86B</label>
    </interactant>
    <organismsDiffer>false</organismsDiffer>
    <experiments>3</experiments>
</comment>
<comment type="interaction">
    <interactant intactId="EBI-713304">
        <id>Q9H0Q3</id>
    </interactant>
    <interactant intactId="EBI-11724433">
        <id>Q6ZT21</id>
        <label>TMPPE</label>
    </interactant>
    <organismsDiffer>false</organismsDiffer>
    <experiments>3</experiments>
</comment>
<comment type="subcellular location">
    <subcellularLocation>
        <location evidence="1">Cell membrane</location>
        <topology evidence="8">Single-pass type I membrane protein</topology>
    </subcellularLocation>
</comment>
<comment type="alternative products">
    <event type="alternative splicing"/>
    <isoform>
        <id>Q9H0Q3-1</id>
        <name>1</name>
        <sequence type="displayed"/>
    </isoform>
    <isoform>
        <id>Q9H0Q3-2</id>
        <name>2</name>
        <sequence type="described" ref="VSP_045996"/>
    </isoform>
</comment>
<comment type="similarity">
    <text evidence="8">Belongs to the FXYD family.</text>
</comment>
<comment type="sequence caution" evidence="8">
    <conflict type="frameshift">
        <sequence resource="EMBL-CDS" id="AAQ89335"/>
    </conflict>
</comment>
<keyword id="KW-0002">3D-structure</keyword>
<keyword id="KW-0025">Alternative splicing</keyword>
<keyword id="KW-1003">Cell membrane</keyword>
<keyword id="KW-0406">Ion transport</keyword>
<keyword id="KW-0472">Membrane</keyword>
<keyword id="KW-0630">Potassium</keyword>
<keyword id="KW-0633">Potassium transport</keyword>
<keyword id="KW-1267">Proteomics identification</keyword>
<keyword id="KW-1185">Reference proteome</keyword>
<keyword id="KW-0732">Signal</keyword>
<keyword id="KW-0915">Sodium</keyword>
<keyword id="KW-0739">Sodium transport</keyword>
<keyword id="KW-0740">Sodium/potassium transport</keyword>
<keyword id="KW-0812">Transmembrane</keyword>
<keyword id="KW-1133">Transmembrane helix</keyword>
<keyword id="KW-0813">Transport</keyword>
<gene>
    <name evidence="9" type="primary">FXYD6</name>
    <name type="ORF">UNQ521/PRO1056</name>
</gene>
<sequence>MELVLVFLCSLLAPMVLASAAEKEKEMDPFHYDYQTLRIGGLVFAVVLFSVGILLILSRRCKCSFNQKPRAPGDEEAQVENLITANATEPQKAEN</sequence>
<reference key="1">
    <citation type="journal article" date="2001" name="Genome Res.">
        <title>Towards a catalog of human genes and proteins: sequencing and analysis of 500 novel complete protein coding human cDNAs.</title>
        <authorList>
            <person name="Wiemann S."/>
            <person name="Weil B."/>
            <person name="Wellenreuther R."/>
            <person name="Gassenhuber J."/>
            <person name="Glassl S."/>
            <person name="Ansorge W."/>
            <person name="Boecher M."/>
            <person name="Bloecker H."/>
            <person name="Bauersachs S."/>
            <person name="Blum H."/>
            <person name="Lauber J."/>
            <person name="Duesterhoeft A."/>
            <person name="Beyer A."/>
            <person name="Koehrer K."/>
            <person name="Strack N."/>
            <person name="Mewes H.-W."/>
            <person name="Ottenwaelder B."/>
            <person name="Obermaier B."/>
            <person name="Tampe J."/>
            <person name="Heubner D."/>
            <person name="Wambutt R."/>
            <person name="Korn B."/>
            <person name="Klein M."/>
            <person name="Poustka A."/>
        </authorList>
    </citation>
    <scope>NUCLEOTIDE SEQUENCE [LARGE SCALE MRNA] (ISOFORM 1)</scope>
    <source>
        <tissue>Brain</tissue>
    </source>
</reference>
<reference key="2">
    <citation type="journal article" date="2003" name="Genome Res.">
        <title>The secreted protein discovery initiative (SPDI), a large-scale effort to identify novel human secreted and transmembrane proteins: a bioinformatics assessment.</title>
        <authorList>
            <person name="Clark H.F."/>
            <person name="Gurney A.L."/>
            <person name="Abaya E."/>
            <person name="Baker K."/>
            <person name="Baldwin D.T."/>
            <person name="Brush J."/>
            <person name="Chen J."/>
            <person name="Chow B."/>
            <person name="Chui C."/>
            <person name="Crowley C."/>
            <person name="Currell B."/>
            <person name="Deuel B."/>
            <person name="Dowd P."/>
            <person name="Eaton D."/>
            <person name="Foster J.S."/>
            <person name="Grimaldi C."/>
            <person name="Gu Q."/>
            <person name="Hass P.E."/>
            <person name="Heldens S."/>
            <person name="Huang A."/>
            <person name="Kim H.S."/>
            <person name="Klimowski L."/>
            <person name="Jin Y."/>
            <person name="Johnson S."/>
            <person name="Lee J."/>
            <person name="Lewis L."/>
            <person name="Liao D."/>
            <person name="Mark M.R."/>
            <person name="Robbie E."/>
            <person name="Sanchez C."/>
            <person name="Schoenfeld J."/>
            <person name="Seshagiri S."/>
            <person name="Simmons L."/>
            <person name="Singh J."/>
            <person name="Smith V."/>
            <person name="Stinson J."/>
            <person name="Vagts A."/>
            <person name="Vandlen R.L."/>
            <person name="Watanabe C."/>
            <person name="Wieand D."/>
            <person name="Woods K."/>
            <person name="Xie M.-H."/>
            <person name="Yansura D.G."/>
            <person name="Yi S."/>
            <person name="Yu G."/>
            <person name="Yuan J."/>
            <person name="Zhang M."/>
            <person name="Zhang Z."/>
            <person name="Goddard A.D."/>
            <person name="Wood W.I."/>
            <person name="Godowski P.J."/>
            <person name="Gray A.M."/>
        </authorList>
    </citation>
    <scope>NUCLEOTIDE SEQUENCE [LARGE SCALE MRNA] (ISOFORM 1)</scope>
</reference>
<reference key="3">
    <citation type="submission" date="2003-05" db="EMBL/GenBank/DDBJ databases">
        <title>Cloning of human full-length CDSs in BD Creator(TM) system donor vector.</title>
        <authorList>
            <person name="Kalnine N."/>
            <person name="Chen X."/>
            <person name="Rolfs A."/>
            <person name="Halleck A."/>
            <person name="Hines L."/>
            <person name="Eisenstein S."/>
            <person name="Koundinya M."/>
            <person name="Raphael J."/>
            <person name="Moreira D."/>
            <person name="Kelley T."/>
            <person name="LaBaer J."/>
            <person name="Lin Y."/>
            <person name="Phelan M."/>
            <person name="Farmer A."/>
        </authorList>
    </citation>
    <scope>NUCLEOTIDE SEQUENCE [LARGE SCALE MRNA] (ISOFORM 1)</scope>
</reference>
<reference key="4">
    <citation type="journal article" date="2004" name="Nat. Biotechnol.">
        <title>Transcriptome characterization elucidates signaling networks that control human ES cell growth and differentiation.</title>
        <authorList>
            <person name="Brandenberger R."/>
            <person name="Wei H."/>
            <person name="Zhang S."/>
            <person name="Lei S."/>
            <person name="Murage J."/>
            <person name="Fisk G.J."/>
            <person name="Li Y."/>
            <person name="Xu C."/>
            <person name="Fang R."/>
            <person name="Guegler K."/>
            <person name="Rao M.S."/>
            <person name="Mandalam R."/>
            <person name="Lebkowski J."/>
            <person name="Stanton L.W."/>
        </authorList>
    </citation>
    <scope>NUCLEOTIDE SEQUENCE [LARGE SCALE MRNA] (ISOFORM 2)</scope>
    <source>
        <tissue>Embryonic stem cell</tissue>
    </source>
</reference>
<reference key="5">
    <citation type="submission" date="2004-06" db="EMBL/GenBank/DDBJ databases">
        <title>Cloning of human full open reading frames in Gateway(TM) system entry vector (pDONR201).</title>
        <authorList>
            <person name="Ebert L."/>
            <person name="Schick M."/>
            <person name="Neubert P."/>
            <person name="Schatten R."/>
            <person name="Henze S."/>
            <person name="Korn B."/>
        </authorList>
    </citation>
    <scope>NUCLEOTIDE SEQUENCE [LARGE SCALE MRNA] (ISOFORM 1)</scope>
</reference>
<reference key="6">
    <citation type="journal article" date="2004" name="Nat. Genet.">
        <title>Complete sequencing and characterization of 21,243 full-length human cDNAs.</title>
        <authorList>
            <person name="Ota T."/>
            <person name="Suzuki Y."/>
            <person name="Nishikawa T."/>
            <person name="Otsuki T."/>
            <person name="Sugiyama T."/>
            <person name="Irie R."/>
            <person name="Wakamatsu A."/>
            <person name="Hayashi K."/>
            <person name="Sato H."/>
            <person name="Nagai K."/>
            <person name="Kimura K."/>
            <person name="Makita H."/>
            <person name="Sekine M."/>
            <person name="Obayashi M."/>
            <person name="Nishi T."/>
            <person name="Shibahara T."/>
            <person name="Tanaka T."/>
            <person name="Ishii S."/>
            <person name="Yamamoto J."/>
            <person name="Saito K."/>
            <person name="Kawai Y."/>
            <person name="Isono Y."/>
            <person name="Nakamura Y."/>
            <person name="Nagahari K."/>
            <person name="Murakami K."/>
            <person name="Yasuda T."/>
            <person name="Iwayanagi T."/>
            <person name="Wagatsuma M."/>
            <person name="Shiratori A."/>
            <person name="Sudo H."/>
            <person name="Hosoiri T."/>
            <person name="Kaku Y."/>
            <person name="Kodaira H."/>
            <person name="Kondo H."/>
            <person name="Sugawara M."/>
            <person name="Takahashi M."/>
            <person name="Kanda K."/>
            <person name="Yokoi T."/>
            <person name="Furuya T."/>
            <person name="Kikkawa E."/>
            <person name="Omura Y."/>
            <person name="Abe K."/>
            <person name="Kamihara K."/>
            <person name="Katsuta N."/>
            <person name="Sato K."/>
            <person name="Tanikawa M."/>
            <person name="Yamazaki M."/>
            <person name="Ninomiya K."/>
            <person name="Ishibashi T."/>
            <person name="Yamashita H."/>
            <person name="Murakawa K."/>
            <person name="Fujimori K."/>
            <person name="Tanai H."/>
            <person name="Kimata M."/>
            <person name="Watanabe M."/>
            <person name="Hiraoka S."/>
            <person name="Chiba Y."/>
            <person name="Ishida S."/>
            <person name="Ono Y."/>
            <person name="Takiguchi S."/>
            <person name="Watanabe S."/>
            <person name="Yosida M."/>
            <person name="Hotuta T."/>
            <person name="Kusano J."/>
            <person name="Kanehori K."/>
            <person name="Takahashi-Fujii A."/>
            <person name="Hara H."/>
            <person name="Tanase T.-O."/>
            <person name="Nomura Y."/>
            <person name="Togiya S."/>
            <person name="Komai F."/>
            <person name="Hara R."/>
            <person name="Takeuchi K."/>
            <person name="Arita M."/>
            <person name="Imose N."/>
            <person name="Musashino K."/>
            <person name="Yuuki H."/>
            <person name="Oshima A."/>
            <person name="Sasaki N."/>
            <person name="Aotsuka S."/>
            <person name="Yoshikawa Y."/>
            <person name="Matsunawa H."/>
            <person name="Ichihara T."/>
            <person name="Shiohata N."/>
            <person name="Sano S."/>
            <person name="Moriya S."/>
            <person name="Momiyama H."/>
            <person name="Satoh N."/>
            <person name="Takami S."/>
            <person name="Terashima Y."/>
            <person name="Suzuki O."/>
            <person name="Nakagawa S."/>
            <person name="Senoh A."/>
            <person name="Mizoguchi H."/>
            <person name="Goto Y."/>
            <person name="Shimizu F."/>
            <person name="Wakebe H."/>
            <person name="Hishigaki H."/>
            <person name="Watanabe T."/>
            <person name="Sugiyama A."/>
            <person name="Takemoto M."/>
            <person name="Kawakami B."/>
            <person name="Yamazaki M."/>
            <person name="Watanabe K."/>
            <person name="Kumagai A."/>
            <person name="Itakura S."/>
            <person name="Fukuzumi Y."/>
            <person name="Fujimori Y."/>
            <person name="Komiyama M."/>
            <person name="Tashiro H."/>
            <person name="Tanigami A."/>
            <person name="Fujiwara T."/>
            <person name="Ono T."/>
            <person name="Yamada K."/>
            <person name="Fujii Y."/>
            <person name="Ozaki K."/>
            <person name="Hirao M."/>
            <person name="Ohmori Y."/>
            <person name="Kawabata A."/>
            <person name="Hikiji T."/>
            <person name="Kobatake N."/>
            <person name="Inagaki H."/>
            <person name="Ikema Y."/>
            <person name="Okamoto S."/>
            <person name="Okitani R."/>
            <person name="Kawakami T."/>
            <person name="Noguchi S."/>
            <person name="Itoh T."/>
            <person name="Shigeta K."/>
            <person name="Senba T."/>
            <person name="Matsumura K."/>
            <person name="Nakajima Y."/>
            <person name="Mizuno T."/>
            <person name="Morinaga M."/>
            <person name="Sasaki M."/>
            <person name="Togashi T."/>
            <person name="Oyama M."/>
            <person name="Hata H."/>
            <person name="Watanabe M."/>
            <person name="Komatsu T."/>
            <person name="Mizushima-Sugano J."/>
            <person name="Satoh T."/>
            <person name="Shirai Y."/>
            <person name="Takahashi Y."/>
            <person name="Nakagawa K."/>
            <person name="Okumura K."/>
            <person name="Nagase T."/>
            <person name="Nomura N."/>
            <person name="Kikuchi H."/>
            <person name="Masuho Y."/>
            <person name="Yamashita R."/>
            <person name="Nakai K."/>
            <person name="Yada T."/>
            <person name="Nakamura Y."/>
            <person name="Ohara O."/>
            <person name="Isogai T."/>
            <person name="Sugano S."/>
        </authorList>
    </citation>
    <scope>NUCLEOTIDE SEQUENCE [LARGE SCALE MRNA] (ISOFORM 1)</scope>
    <source>
        <tissue>Amygdala</tissue>
    </source>
</reference>
<reference key="7">
    <citation type="journal article" date="2007" name="BMC Genomics">
        <title>The full-ORF clone resource of the German cDNA consortium.</title>
        <authorList>
            <person name="Bechtel S."/>
            <person name="Rosenfelder H."/>
            <person name="Duda A."/>
            <person name="Schmidt C.P."/>
            <person name="Ernst U."/>
            <person name="Wellenreuther R."/>
            <person name="Mehrle A."/>
            <person name="Schuster C."/>
            <person name="Bahr A."/>
            <person name="Bloecker H."/>
            <person name="Heubner D."/>
            <person name="Hoerlein A."/>
            <person name="Michel G."/>
            <person name="Wedler H."/>
            <person name="Koehrer K."/>
            <person name="Ottenwaelder B."/>
            <person name="Poustka A."/>
            <person name="Wiemann S."/>
            <person name="Schupp I."/>
        </authorList>
    </citation>
    <scope>NUCLEOTIDE SEQUENCE [LARGE SCALE MRNA] (ISOFORM 1)</scope>
    <source>
        <tissue>Lymph node</tissue>
    </source>
</reference>
<reference key="8">
    <citation type="journal article" date="2006" name="Nature">
        <title>Human chromosome 11 DNA sequence and analysis including novel gene identification.</title>
        <authorList>
            <person name="Taylor T.D."/>
            <person name="Noguchi H."/>
            <person name="Totoki Y."/>
            <person name="Toyoda A."/>
            <person name="Kuroki Y."/>
            <person name="Dewar K."/>
            <person name="Lloyd C."/>
            <person name="Itoh T."/>
            <person name="Takeda T."/>
            <person name="Kim D.-W."/>
            <person name="She X."/>
            <person name="Barlow K.F."/>
            <person name="Bloom T."/>
            <person name="Bruford E."/>
            <person name="Chang J.L."/>
            <person name="Cuomo C.A."/>
            <person name="Eichler E."/>
            <person name="FitzGerald M.G."/>
            <person name="Jaffe D.B."/>
            <person name="LaButti K."/>
            <person name="Nicol R."/>
            <person name="Park H.-S."/>
            <person name="Seaman C."/>
            <person name="Sougnez C."/>
            <person name="Yang X."/>
            <person name="Zimmer A.R."/>
            <person name="Zody M.C."/>
            <person name="Birren B.W."/>
            <person name="Nusbaum C."/>
            <person name="Fujiyama A."/>
            <person name="Hattori M."/>
            <person name="Rogers J."/>
            <person name="Lander E.S."/>
            <person name="Sakaki Y."/>
        </authorList>
    </citation>
    <scope>NUCLEOTIDE SEQUENCE [LARGE SCALE GENOMIC DNA]</scope>
</reference>
<reference key="9">
    <citation type="submission" date="2005-07" db="EMBL/GenBank/DDBJ databases">
        <authorList>
            <person name="Mural R.J."/>
            <person name="Istrail S."/>
            <person name="Sutton G.G."/>
            <person name="Florea L."/>
            <person name="Halpern A.L."/>
            <person name="Mobarry C.M."/>
            <person name="Lippert R."/>
            <person name="Walenz B."/>
            <person name="Shatkay H."/>
            <person name="Dew I."/>
            <person name="Miller J.R."/>
            <person name="Flanigan M.J."/>
            <person name="Edwards N.J."/>
            <person name="Bolanos R."/>
            <person name="Fasulo D."/>
            <person name="Halldorsson B.V."/>
            <person name="Hannenhalli S."/>
            <person name="Turner R."/>
            <person name="Yooseph S."/>
            <person name="Lu F."/>
            <person name="Nusskern D.R."/>
            <person name="Shue B.C."/>
            <person name="Zheng X.H."/>
            <person name="Zhong F."/>
            <person name="Delcher A.L."/>
            <person name="Huson D.H."/>
            <person name="Kravitz S.A."/>
            <person name="Mouchard L."/>
            <person name="Reinert K."/>
            <person name="Remington K.A."/>
            <person name="Clark A.G."/>
            <person name="Waterman M.S."/>
            <person name="Eichler E.E."/>
            <person name="Adams M.D."/>
            <person name="Hunkapiller M.W."/>
            <person name="Myers E.W."/>
            <person name="Venter J.C."/>
        </authorList>
    </citation>
    <scope>NUCLEOTIDE SEQUENCE [LARGE SCALE GENOMIC DNA]</scope>
</reference>
<reference key="10">
    <citation type="journal article" date="2004" name="Genome Res.">
        <title>The status, quality, and expansion of the NIH full-length cDNA project: the Mammalian Gene Collection (MGC).</title>
        <authorList>
            <consortium name="The MGC Project Team"/>
        </authorList>
    </citation>
    <scope>NUCLEOTIDE SEQUENCE [LARGE SCALE MRNA] (ISOFORM 1)</scope>
    <source>
        <tissue>Lung</tissue>
        <tissue>Uterus</tissue>
    </source>
</reference>
<reference key="11">
    <citation type="journal article" date="2020" name="J. Gen. Physiol.">
        <title>FXYD protein isoforms differentially modulate human Na/K pump function.</title>
        <authorList>
            <person name="Meyer D.J."/>
            <person name="Bijlani S."/>
            <person name="de Sautu M."/>
            <person name="Spontarelli K."/>
            <person name="Young V.C."/>
            <person name="Gatto C."/>
            <person name="Artigas P."/>
        </authorList>
    </citation>
    <scope>FUNCTION</scope>
</reference>
<reference evidence="10 11 12 13 14" key="12">
    <citation type="journal article" date="2022" name="Nat. Commun.">
        <title>Structural basis for gating mechanism of the human sodium-potassium pump.</title>
        <authorList>
            <person name="Nguyen P.T."/>
            <person name="Deisl C."/>
            <person name="Fine M."/>
            <person name="Tippetts T.S."/>
            <person name="Uchikawa E."/>
            <person name="Bai X.C."/>
            <person name="Levine B."/>
        </authorList>
    </citation>
    <scope>STRUCTURE BY ELECTRON MICROSCOPY (3.40 ANGSTROMS) OF 28-58</scope>
    <scope>IDENTIFICATION IN SODIUM/POTASSIUM-TRANSPORTING ATPASE COMPLEX</scope>
</reference>